<comment type="subcellular location">
    <subcellularLocation>
        <location evidence="1">Cell membrane</location>
        <topology evidence="1">Multi-pass membrane protein</topology>
    </subcellularLocation>
</comment>
<comment type="similarity">
    <text evidence="1">Belongs to the UPF0756 family.</text>
</comment>
<keyword id="KW-1003">Cell membrane</keyword>
<keyword id="KW-0472">Membrane</keyword>
<keyword id="KW-1185">Reference proteome</keyword>
<keyword id="KW-0812">Transmembrane</keyword>
<keyword id="KW-1133">Transmembrane helix</keyword>
<sequence length="151" mass="16402">MQRANIILLSLILMGYLAESALLATAGCILLVMRLSKLNRLMFLLERRGLEVGLIFLMLSVLVPLAHDNIVYKELVMKTLSPQGLLALIGGTLATHMNGEGLKLLKLDPQLIFGMVIGSLIGIVFLGGIPIGPLMAAGLTALFLEVIYWFK</sequence>
<dbReference type="EMBL" id="CP000612">
    <property type="protein sequence ID" value="ABO49632.1"/>
    <property type="molecule type" value="Genomic_DNA"/>
</dbReference>
<dbReference type="RefSeq" id="WP_011877458.1">
    <property type="nucleotide sequence ID" value="NC_009253.1"/>
</dbReference>
<dbReference type="STRING" id="349161.Dred_1097"/>
<dbReference type="KEGG" id="drm:Dred_1097"/>
<dbReference type="eggNOG" id="COG2707">
    <property type="taxonomic scope" value="Bacteria"/>
</dbReference>
<dbReference type="HOGENOM" id="CLU_125889_1_0_9"/>
<dbReference type="OrthoDB" id="80306at2"/>
<dbReference type="Proteomes" id="UP000001556">
    <property type="component" value="Chromosome"/>
</dbReference>
<dbReference type="GO" id="GO:0005886">
    <property type="term" value="C:plasma membrane"/>
    <property type="evidence" value="ECO:0007669"/>
    <property type="project" value="UniProtKB-SubCell"/>
</dbReference>
<dbReference type="HAMAP" id="MF_01874">
    <property type="entry name" value="UPF0756"/>
    <property type="match status" value="1"/>
</dbReference>
<dbReference type="InterPro" id="IPR007382">
    <property type="entry name" value="UPF0756_TM"/>
</dbReference>
<dbReference type="PANTHER" id="PTHR38452">
    <property type="entry name" value="UPF0756 MEMBRANE PROTEIN YEAL"/>
    <property type="match status" value="1"/>
</dbReference>
<dbReference type="PANTHER" id="PTHR38452:SF1">
    <property type="entry name" value="UPF0756 MEMBRANE PROTEIN YEAL"/>
    <property type="match status" value="1"/>
</dbReference>
<dbReference type="Pfam" id="PF04284">
    <property type="entry name" value="DUF441"/>
    <property type="match status" value="1"/>
</dbReference>
<organism>
    <name type="scientific">Desulforamulus reducens (strain ATCC BAA-1160 / DSM 100696 / MI-1)</name>
    <name type="common">Desulfotomaculum reducens</name>
    <dbReference type="NCBI Taxonomy" id="349161"/>
    <lineage>
        <taxon>Bacteria</taxon>
        <taxon>Bacillati</taxon>
        <taxon>Bacillota</taxon>
        <taxon>Clostridia</taxon>
        <taxon>Eubacteriales</taxon>
        <taxon>Peptococcaceae</taxon>
        <taxon>Desulforamulus</taxon>
    </lineage>
</organism>
<protein>
    <recommendedName>
        <fullName evidence="1">UPF0756 membrane protein Dred_1097</fullName>
    </recommendedName>
</protein>
<reference key="1">
    <citation type="submission" date="2007-03" db="EMBL/GenBank/DDBJ databases">
        <title>Complete sequence of Desulfotomaculum reducens MI-1.</title>
        <authorList>
            <consortium name="US DOE Joint Genome Institute"/>
            <person name="Copeland A."/>
            <person name="Lucas S."/>
            <person name="Lapidus A."/>
            <person name="Barry K."/>
            <person name="Detter J.C."/>
            <person name="Glavina del Rio T."/>
            <person name="Hammon N."/>
            <person name="Israni S."/>
            <person name="Dalin E."/>
            <person name="Tice H."/>
            <person name="Pitluck S."/>
            <person name="Sims D."/>
            <person name="Brettin T."/>
            <person name="Bruce D."/>
            <person name="Han C."/>
            <person name="Tapia R."/>
            <person name="Schmutz J."/>
            <person name="Larimer F."/>
            <person name="Land M."/>
            <person name="Hauser L."/>
            <person name="Kyrpides N."/>
            <person name="Kim E."/>
            <person name="Tebo B.M."/>
            <person name="Richardson P."/>
        </authorList>
    </citation>
    <scope>NUCLEOTIDE SEQUENCE [LARGE SCALE GENOMIC DNA]</scope>
    <source>
        <strain>ATCC BAA-1160 / DSM 100696 / MI-1</strain>
    </source>
</reference>
<feature type="chain" id="PRO_0000388847" description="UPF0756 membrane protein Dred_1097">
    <location>
        <begin position="1"/>
        <end position="151"/>
    </location>
</feature>
<feature type="transmembrane region" description="Helical" evidence="1">
    <location>
        <begin position="6"/>
        <end position="26"/>
    </location>
</feature>
<feature type="transmembrane region" description="Helical" evidence="1">
    <location>
        <begin position="52"/>
        <end position="72"/>
    </location>
</feature>
<feature type="transmembrane region" description="Helical" evidence="1">
    <location>
        <begin position="75"/>
        <end position="95"/>
    </location>
</feature>
<feature type="transmembrane region" description="Helical" evidence="1">
    <location>
        <begin position="111"/>
        <end position="131"/>
    </location>
</feature>
<gene>
    <name type="ordered locus">Dred_1097</name>
</gene>
<accession>A4J3H9</accession>
<name>Y1097_DESRM</name>
<evidence type="ECO:0000255" key="1">
    <source>
        <dbReference type="HAMAP-Rule" id="MF_01874"/>
    </source>
</evidence>
<proteinExistence type="inferred from homology"/>